<dbReference type="EC" id="3.4.-.-" evidence="10"/>
<dbReference type="EMBL" id="AE000512">
    <property type="protein sequence ID" value="AAD35867.1"/>
    <property type="status" value="ALT_FRAME"/>
    <property type="molecule type" value="Genomic_DNA"/>
</dbReference>
<dbReference type="PIR" id="B72333">
    <property type="entry name" value="B72333"/>
</dbReference>
<dbReference type="RefSeq" id="NP_228594.1">
    <property type="nucleotide sequence ID" value="NC_000853.1"/>
</dbReference>
<dbReference type="RefSeq" id="WP_004080898.1">
    <property type="nucleotide sequence ID" value="NZ_CP011107.1"/>
</dbReference>
<dbReference type="PDB" id="3DKT">
    <property type="method" value="X-ray"/>
    <property type="resolution" value="3.10 A"/>
    <property type="chains" value="A/B/C/D/E/F/G/H/I/J=1-265"/>
</dbReference>
<dbReference type="PDB" id="6WKV">
    <property type="method" value="EM"/>
    <property type="resolution" value="2.99 A"/>
    <property type="chains" value="0/1/2/3/4/5/6/7/8/9/A/B/C/D/E/F/G/H/I/J/K/L/M/N/O/P/Q/R/S/T=1-265"/>
</dbReference>
<dbReference type="PDB" id="7K5W">
    <property type="method" value="EM"/>
    <property type="resolution" value="2.87 A"/>
    <property type="chains" value="A=1-265"/>
</dbReference>
<dbReference type="PDB" id="7KQ5">
    <property type="method" value="EM"/>
    <property type="resolution" value="2.00 A"/>
    <property type="chains" value="A=1-265"/>
</dbReference>
<dbReference type="PDB" id="7LII">
    <property type="method" value="EM"/>
    <property type="resolution" value="3.55 A"/>
    <property type="chains" value="A=1-265"/>
</dbReference>
<dbReference type="PDB" id="7LIJ">
    <property type="method" value="EM"/>
    <property type="resolution" value="2.84 A"/>
    <property type="chains" value="A=1-265"/>
</dbReference>
<dbReference type="PDB" id="7LIK">
    <property type="method" value="EM"/>
    <property type="resolution" value="2.91 A"/>
    <property type="chains" value="A=1-265"/>
</dbReference>
<dbReference type="PDB" id="7LIL">
    <property type="method" value="EM"/>
    <property type="resolution" value="2.84 A"/>
    <property type="chains" value="A=1-265"/>
</dbReference>
<dbReference type="PDB" id="7LIM">
    <property type="method" value="EM"/>
    <property type="resolution" value="2.75 A"/>
    <property type="chains" value="A=1-265"/>
</dbReference>
<dbReference type="PDB" id="7LIS">
    <property type="method" value="EM"/>
    <property type="resolution" value="2.96 A"/>
    <property type="chains" value="A=1-265"/>
</dbReference>
<dbReference type="PDB" id="7LIT">
    <property type="method" value="EM"/>
    <property type="resolution" value="2.53 A"/>
    <property type="chains" value="A=1-265"/>
</dbReference>
<dbReference type="PDB" id="7MU1">
    <property type="method" value="EM"/>
    <property type="resolution" value="3.30 A"/>
    <property type="chains" value="A=1-264"/>
</dbReference>
<dbReference type="PDBsum" id="3DKT"/>
<dbReference type="PDBsum" id="6WKV"/>
<dbReference type="PDBsum" id="7K5W"/>
<dbReference type="PDBsum" id="7KQ5"/>
<dbReference type="PDBsum" id="7LII"/>
<dbReference type="PDBsum" id="7LIJ"/>
<dbReference type="PDBsum" id="7LIK"/>
<dbReference type="PDBsum" id="7LIL"/>
<dbReference type="PDBsum" id="7LIM"/>
<dbReference type="PDBsum" id="7LIS"/>
<dbReference type="PDBsum" id="7LIT"/>
<dbReference type="PDBsum" id="7MU1"/>
<dbReference type="EMDB" id="EMD-21810"/>
<dbReference type="EMDB" id="EMD-22992"/>
<dbReference type="EMDB" id="EMD-23379"/>
<dbReference type="EMDB" id="EMD-23380"/>
<dbReference type="EMDB" id="EMD-23381"/>
<dbReference type="EMDB" id="EMD-23382"/>
<dbReference type="EMDB" id="EMD-23383"/>
<dbReference type="EMDB" id="EMD-23384"/>
<dbReference type="EMDB" id="EMD-23385"/>
<dbReference type="EMDB" id="EMD-24001"/>
<dbReference type="SMR" id="Q9WZP2"/>
<dbReference type="IntAct" id="Q9WZP2">
    <property type="interactions" value="1"/>
</dbReference>
<dbReference type="STRING" id="243274.TM_0785"/>
<dbReference type="MEROPS" id="U56.001"/>
<dbReference type="TCDB" id="1.S.6.1.1">
    <property type="family name" value="the bacterial/archaeal nanocompartment encapsulin shell protein1 (banc-sp1) family"/>
</dbReference>
<dbReference type="PaxDb" id="243274-THEMA_00725"/>
<dbReference type="EnsemblBacteria" id="AAD35867">
    <property type="protein sequence ID" value="AAD35867"/>
    <property type="gene ID" value="TM_0785"/>
</dbReference>
<dbReference type="KEGG" id="tma:TM0785"/>
<dbReference type="KEGG" id="tmi:THEMA_00725"/>
<dbReference type="KEGG" id="tmm:Tmari_0786"/>
<dbReference type="KEGG" id="tmw:THMA_0804"/>
<dbReference type="PATRIC" id="fig|243274.5.peg.797"/>
<dbReference type="eggNOG" id="COG1659">
    <property type="taxonomic scope" value="Bacteria"/>
</dbReference>
<dbReference type="InParanoid" id="Q9WZP2"/>
<dbReference type="OrthoDB" id="2922at2"/>
<dbReference type="BRENDA" id="1.16.3.1">
    <property type="organism ID" value="6331"/>
</dbReference>
<dbReference type="BRENDA" id="3.4.21.1">
    <property type="organism ID" value="6331"/>
</dbReference>
<dbReference type="EvolutionaryTrace" id="Q9WZP2"/>
<dbReference type="Proteomes" id="UP000008183">
    <property type="component" value="Chromosome"/>
</dbReference>
<dbReference type="GO" id="GO:0140737">
    <property type="term" value="C:encapsulin nanocompartment"/>
    <property type="evidence" value="ECO:0000314"/>
    <property type="project" value="UniProtKB"/>
</dbReference>
<dbReference type="GO" id="GO:0008233">
    <property type="term" value="F:peptidase activity"/>
    <property type="evidence" value="ECO:0007669"/>
    <property type="project" value="UniProtKB-KW"/>
</dbReference>
<dbReference type="GO" id="GO:0006879">
    <property type="term" value="P:intracellular iron ion homeostasis"/>
    <property type="evidence" value="ECO:0007669"/>
    <property type="project" value="UniProtKB-KW"/>
</dbReference>
<dbReference type="GO" id="GO:0006826">
    <property type="term" value="P:iron ion transport"/>
    <property type="evidence" value="ECO:0007669"/>
    <property type="project" value="UniProtKB-KW"/>
</dbReference>
<dbReference type="GO" id="GO:0006508">
    <property type="term" value="P:proteolysis"/>
    <property type="evidence" value="ECO:0007669"/>
    <property type="project" value="UniProtKB-KW"/>
</dbReference>
<dbReference type="Gene3D" id="3.30.2400.30">
    <property type="match status" value="1"/>
</dbReference>
<dbReference type="Gene3D" id="3.30.2320.10">
    <property type="entry name" value="hypothetical protein PF0899 domain"/>
    <property type="match status" value="1"/>
</dbReference>
<dbReference type="InterPro" id="IPR007544">
    <property type="entry name" value="ENCAP"/>
</dbReference>
<dbReference type="InterPro" id="IPR051429">
    <property type="entry name" value="Encapsulin_nc"/>
</dbReference>
<dbReference type="NCBIfam" id="NF041155">
    <property type="entry name" value="encap_f1"/>
    <property type="match status" value="1"/>
</dbReference>
<dbReference type="PANTHER" id="PTHR37165">
    <property type="entry name" value="PEPTIDASE U56 FAMILY"/>
    <property type="match status" value="1"/>
</dbReference>
<dbReference type="PANTHER" id="PTHR37165:SF1">
    <property type="entry name" value="TYPE 1 ENCAPSULIN SHELL PROTEIN"/>
    <property type="match status" value="1"/>
</dbReference>
<dbReference type="Pfam" id="PF04454">
    <property type="entry name" value="Linocin_M18"/>
    <property type="match status" value="1"/>
</dbReference>
<dbReference type="PIRSF" id="PIRSF019254">
    <property type="entry name" value="CFP29"/>
    <property type="match status" value="1"/>
</dbReference>
<name>ENCAP_THEMA</name>
<accession>Q9WZP2</accession>
<gene>
    <name evidence="14" type="primary">enc</name>
    <name type="ordered locus">TM_0785</name>
</gene>
<keyword id="KW-0002">3D-structure</keyword>
<keyword id="KW-0903">Direct protein sequencing</keyword>
<keyword id="KW-1284">Encapsulin nanocompartment</keyword>
<keyword id="KW-0285">Flavoprotein</keyword>
<keyword id="KW-0288">FMN</keyword>
<keyword id="KW-0378">Hydrolase</keyword>
<keyword id="KW-0406">Ion transport</keyword>
<keyword id="KW-0408">Iron</keyword>
<keyword id="KW-0409">Iron storage</keyword>
<keyword id="KW-0410">Iron transport</keyword>
<keyword id="KW-0645">Protease</keyword>
<keyword id="KW-1185">Reference proteome</keyword>
<keyword id="KW-0813">Transport</keyword>
<proteinExistence type="evidence at protein level"/>
<comment type="function">
    <text evidence="2 3 4 5 6 7 8 9 16">Shell component of a type 1 encapsulin nanocompartment. Assembles into proteinaceous shells 23-24 nm in diameter with 2-2.5 nm thick walls. Cargo protein Flp (ferritin-like protein, probably stores iron) is targeted to the interior via its C-terminal extension; empty intact shells can be isolated in the absence of cargo protein (PubMed:19172747, PubMed:27224728, PubMed:30376298, PubMed:32961724, PubMed:33769792, PubMed:33953921, PubMed:34815415, PubMed:35119930). Fe(2+) may be able to pass though the 5-fold and dimer channels in the protein shell (Probable) (PubMed:33953921).</text>
</comment>
<comment type="function">
    <text evidence="1 10 15">Protease that exhibits activity toward chymotrypsin and trypsin substrates (PubMed:11210524, PubMed:9872409). Probably does not have antibacterial activity (Probable).</text>
</comment>
<comment type="cofactor">
    <cofactor evidence="7 8 9">
        <name>FMN</name>
        <dbReference type="ChEBI" id="CHEBI:58210"/>
    </cofactor>
    <text evidence="7 8 9">A flavin ligand is bound near the 3-fold axis channel; FMN is consistent with the observed density, absorbance data and mass spectrometry.</text>
</comment>
<comment type="activity regulation">
    <text evidence="10">Proteolysis activated by calcium and cobalt.</text>
</comment>
<comment type="biophysicochemical properties">
    <phDependence>
        <text evidence="1 3 10">Optimum pH for protease activity is 7.1 (PubMed:11210524, PubMed:9872409). Nanocompartments are stable from pH 4-12, they reversibly disassemble at pH 1 and pH 13 (PubMed:27224728).</text>
    </phDependence>
    <temperatureDependence>
        <text evidence="1 10">Optimum temperature for protease activity is 90-93 degrees Celsius.</text>
    </temperatureDependence>
</comment>
<comment type="subunit">
    <text evidence="2 4 5 6 7 8 9 10 18">Homomultimeric (PubMed:9872409). This encapsulin nanocompartment is formed by 60 subunits; monomers form 12 pentamers which assemble to form shells. There are 12 pores where the pentamers meet as well as 3-fold axis channels and dimer channels; none are larger than 3-4 Angstroms in diameter. The N-terminus of the protein is inside the shell, the C-terminus is outside (PubMed:19172747, PubMed:30376298, PubMed:32961724, PubMed:33769792, PubMed:33953921, PubMed:34815415, PubMed:35119930, PubMed:9872409). Probably 3, 4 or 5 Flp cargo decamers bind inside the encapulin nanocompartment (Probable) (PubMed:34815415).</text>
</comment>
<comment type="subcellular location">
    <subcellularLocation>
        <location evidence="2 3 4 5 6 7 8 9 19">Encapsulin nanocompartment</location>
    </subcellularLocation>
    <text evidence="2 19">Globular particles 19-20 nm, with 60-80 nm long tails (Probable). Shells are 23-24 nm in diameter, walls are 2.0-2.5 nm thick (PubMed:19172747).</text>
</comment>
<comment type="domain">
    <text evidence="2 4 6 9">Has 3 domains; a discontinuous peripheral domain (P, 13-39, 76-133, 221-254), an elongated loop (E, 53-73) and the discontinuous axial domain (A, 137-216 and 259-263). The E-loop forms contacts between two subunits, while the A domain mediates contacts in the 5-fold interface (PubMed:19172747). Pores are formed by residues 184-189, pore size can be modified by mutagenesis (PubMed:30376298, PubMed:33769792, PubMed:35119930).</text>
</comment>
<comment type="biotechnology">
    <text evidence="3 4 5 6 9">Foreign proteins can be targeted to ectopic nanocompartments in E.coli upon coexpression with a construct using the 15 C-terminal residues of Flp (AC Q9WZP3), tested with GFP. There are at most 20 GFP per compartment. Empty nanocompartments can be disassembled by extreme pH or by 7 M guanidine hydrochloride (GuHCl); only reassembly from GuHCl-dissociated compartments allows incorporation of targeted cargo (PubMed:27224728). The central pore in the pentamer can be enlarged by modifying the pore-forming loop (residues 184-189), which allows transport of larger metabolites than wild-type pores; both pore size and pore charge influence metabolite flux (PubMed:30376298, PubMed:35119930). Artificial metabolons made by targeting proteins to the outside and inside of the nanocompartment have been made in E.coli; increasing pore size increases metabolic flux (PubMed:33769792). Foreign proteins targeted to nanocompartments have been purified and characterized from insect cells. By C-terminally tagging only IDM1 of A.thaliana, all 6 components of the IDM complex were targeted to the nanocompartment (PubMed:32961724).</text>
</comment>
<comment type="miscellaneous">
    <text evidence="15">Shows substantial structural similarity to gp5 of the HK97 viral capsid; while the sequence homology is weak, it suggests this protein may have evolved from a viral capsid protein.</text>
</comment>
<comment type="similarity">
    <text evidence="17">Belongs to the encapsulin family. Family 1 subfamily.</text>
</comment>
<comment type="sequence caution" evidence="14">
    <conflict type="frameshift">
        <sequence resource="EMBL-CDS" id="AAD35867"/>
    </conflict>
</comment>
<organism>
    <name type="scientific">Thermotoga maritima (strain ATCC 43589 / DSM 3109 / JCM 10099 / NBRC 100826 / MSB8)</name>
    <dbReference type="NCBI Taxonomy" id="243274"/>
    <lineage>
        <taxon>Bacteria</taxon>
        <taxon>Thermotogati</taxon>
        <taxon>Thermotogota</taxon>
        <taxon>Thermotogae</taxon>
        <taxon>Thermotogales</taxon>
        <taxon>Thermotogaceae</taxon>
        <taxon>Thermotoga</taxon>
    </lineage>
</organism>
<reference key="1">
    <citation type="journal article" date="1999" name="Nature">
        <title>Evidence for lateral gene transfer between Archaea and Bacteria from genome sequence of Thermotoga maritima.</title>
        <authorList>
            <person name="Nelson K.E."/>
            <person name="Clayton R.A."/>
            <person name="Gill S.R."/>
            <person name="Gwinn M.L."/>
            <person name="Dodson R.J."/>
            <person name="Haft D.H."/>
            <person name="Hickey E.K."/>
            <person name="Peterson J.D."/>
            <person name="Nelson W.C."/>
            <person name="Ketchum K.A."/>
            <person name="McDonald L.A."/>
            <person name="Utterback T.R."/>
            <person name="Malek J.A."/>
            <person name="Linher K.D."/>
            <person name="Garrett M.M."/>
            <person name="Stewart A.M."/>
            <person name="Cotton M.D."/>
            <person name="Pratt M.S."/>
            <person name="Phillips C.A."/>
            <person name="Richardson D.L."/>
            <person name="Heidelberg J.F."/>
            <person name="Sutton G.G."/>
            <person name="Fleischmann R.D."/>
            <person name="Eisen J.A."/>
            <person name="White O."/>
            <person name="Salzberg S.L."/>
            <person name="Smith H.O."/>
            <person name="Venter J.C."/>
            <person name="Fraser C.M."/>
        </authorList>
    </citation>
    <scope>NUCLEOTIDE SEQUENCE [LARGE SCALE GENOMIC DNA]</scope>
    <source>
        <strain>ATCC 43589 / DSM 3109 / JCM 10099 / NBRC 100826 / MSB8</strain>
    </source>
</reference>
<reference key="2">
    <citation type="journal article" date="1998" name="FEBS Lett.">
        <title>Homomultimeric protease in the hyperthermophilic bacterium Thermotoga maritima has structural and amino acid sequence homology to bacteriocins in mesophilic bacteria.</title>
        <authorList>
            <person name="Hicks P.M."/>
            <person name="Rinker K.D."/>
            <person name="Baker J.R."/>
            <person name="Kelly R.M."/>
        </authorList>
    </citation>
    <scope>PROTEIN SEQUENCE OF 1-15</scope>
    <scope>PROTEASE ACTIVITY</scope>
    <scope>CATALYTIC ACTIVITY</scope>
    <scope>ACTIVITY REGULATION</scope>
    <scope>BIOPHYSICOCHEMICAL PROPERTIES</scope>
    <scope>SUBUNIT</scope>
    <scope>SUBCELLULAR LOCATION</scope>
    <source>
        <strain>ATCC 43589 / DSM 3109 / JCM 10099 / NBRC 100826 / MSB8</strain>
    </source>
</reference>
<reference key="3">
    <citation type="journal article" date="2001" name="Methods Enzymol.">
        <title>Homomultimeric protease and putative bacteriocin homolog from Thermotoga maritima.</title>
        <authorList>
            <person name="Hicks P.M."/>
            <person name="Chang L.S."/>
            <person name="Kelly R.M."/>
        </authorList>
    </citation>
    <scope>PROTEIN NAME</scope>
    <scope>BIOPHYSICOCHEMICAL PROPERTIES</scope>
    <source>
        <strain>ATCC 43589 / DSM 3109 / JCM 10099 / NBRC 100826 / MSB8</strain>
    </source>
</reference>
<reference key="4">
    <citation type="journal article" date="2016" name="Biochemistry">
        <title>Identification of a Minimal Peptide Tag for in Vivo and in Vitro Loading of Encapsulin.</title>
        <authorList>
            <person name="Cassidy-Amstutz C."/>
            <person name="Oltrogge L."/>
            <person name="Going C.C."/>
            <person name="Lee A."/>
            <person name="Teng P."/>
            <person name="Quintanilla D."/>
            <person name="East-Seletsky A."/>
            <person name="Williams E.R."/>
            <person name="Savage D.F."/>
        </authorList>
    </citation>
    <scope>FUNCTION</scope>
    <scope>BIOPHYSICOCHEMICAL PROPERTIES</scope>
    <scope>SUBCELLULAR LOCATION</scope>
    <scope>BIOTECHNOLOGY</scope>
    <source>
        <strain>ATCC 43589 / DSM 3109 / JCM 10099 / NBRC 100826 / MSB8</strain>
    </source>
</reference>
<reference key="5">
    <citation type="journal article" date="2018" name="ACS Synth. Biol.">
        <title>Pore Engineering for Enhanced Mass Transport in Encapsulin Nanocompartments.</title>
        <authorList>
            <person name="Williams E.M."/>
            <person name="Jung S.M."/>
            <person name="Coffman J.L."/>
            <person name="Lutz S."/>
        </authorList>
    </citation>
    <scope>FUNCTION</scope>
    <scope>SUBCELLULAR LOCATION</scope>
    <scope>DOMAIN</scope>
    <scope>BIOTECHNOLOGY</scope>
    <scope>MUTAGENESIS OF 182-LYS--LEU-190 AND 184-GLU--PRO-189</scope>
    <source>
        <strain>ATCC 43589 / DSM 3109 / JCM 10099 / NBRC 100826 / MSB8</strain>
    </source>
</reference>
<reference key="6">
    <citation type="journal article" date="2021" name="ACS Synth. Biol.">
        <title>Encapsulin Nanocontainers as Versatile Scaffolds for the Development of Artificial Metabolons.</title>
        <authorList>
            <person name="Jenkins M.C."/>
            <person name="Lutz S."/>
        </authorList>
    </citation>
    <scope>FUNCTION</scope>
    <scope>SUBCELLULAR LOCATION</scope>
    <scope>DOMAIN</scope>
    <scope>BIOTECHNOLOGY</scope>
    <scope>MUTAGENESIS OF 182-LYS--LEU-190</scope>
    <source>
        <strain>ATCC 43589 / DSM 3109 / JCM 10099 / NBRC 100826 / MSB8</strain>
    </source>
</reference>
<reference key="7">
    <citation type="journal article" date="2021" name="Nat. Commun.">
        <title>Large-scale computational discovery and analysis of virus-derived microbial nanocompartments.</title>
        <authorList>
            <person name="Andreas M.P."/>
            <person name="Giessen T.W."/>
        </authorList>
    </citation>
    <scope>CLASSIFICATION</scope>
</reference>
<reference evidence="20" key="8">
    <citation type="journal article" date="2008" name="Nat. Struct. Mol. Biol.">
        <title>Structural basis of enzyme encapsulation into a bacterial nanocompartment.</title>
        <authorList>
            <person name="Sutter M."/>
            <person name="Boehringer D."/>
            <person name="Gutmann S."/>
            <person name="Gunther S."/>
            <person name="Prangishvili D."/>
            <person name="Loessner M.J."/>
            <person name="Stetter K.O."/>
            <person name="Weber-Ban E."/>
            <person name="Ban N."/>
        </authorList>
    </citation>
    <scope>X-RAY CRYSTALLOGRAPHY (3.10 ANGSTROMS)</scope>
    <scope>FUNCTION</scope>
    <scope>SUBUNIT</scope>
    <scope>SUBCELLULAR LOCATION</scope>
    <scope>DOMAIN</scope>
</reference>
<reference evidence="22" key="9">
    <citation type="journal article" date="2020" name="Biomolecules">
        <title>Cryo-EM Structure of Heterologous Protein Complex Loaded Thermotoga Maritima Encapsulin Capsid.</title>
        <authorList>
            <person name="Xiong X."/>
            <person name="Sun C."/>
            <person name="Vago F.S."/>
            <person name="Klose T."/>
            <person name="Zhu J."/>
            <person name="Jiang W."/>
        </authorList>
    </citation>
    <scope>STRUCTURE BY ELECTRON MICROSCOPY (2.87 ANGSTROMS) IN COMPLEX WITH ARTIFICIAL CARGO</scope>
    <scope>FUNCTION</scope>
    <scope>SUBUNIT</scope>
    <scope>SUBCELLULAR LOCATION</scope>
    <scope>BIOTECHNOLOGY</scope>
</reference>
<reference evidence="21" key="10">
    <citation type="submission" date="2020-04" db="PDB data bank">
        <title>Cryo-EM structure of engineered variant of the Encapsulin from Thermotoga maritima (TmE).</title>
        <authorList>
            <person name="Williams E."/>
            <person name="Zhao H."/>
            <person name="Jenkins M."/>
            <person name="Juneja P."/>
            <person name="Lutz S."/>
        </authorList>
    </citation>
    <scope>STRUCTURE BY ELECTRON MICROSCOPY (2.99 ANGSTROMS) OF 11 ANGSTROMS PORE MUTANT</scope>
</reference>
<reference evidence="23" key="11">
    <citation type="journal article" date="2021" name="IUCrJ">
        <title>Cryo-EM structure of a thermostable bacterial nanocompartment.</title>
        <authorList>
            <person name="Wiryaman T."/>
            <person name="Toor N."/>
        </authorList>
    </citation>
    <scope>STRUCTURE BY ELECTRON MICROSCOPY (2.00 ANGSTROMS) IN COMPLEX WITH FLAVIN LIGAND</scope>
    <scope>FUNCTION</scope>
    <scope>PROBABLE FMN COFACTOR</scope>
    <scope>SUBUNIT</scope>
    <scope>SUBCELLULAR LOCATION</scope>
</reference>
<reference evidence="31" key="12">
    <citation type="journal article" date="2021" name="Sci. Rep.">
        <title>The encapsulin from Thermotoga maritima is a flavoprotein with a symmetry matched ferritin-like cargo protein.</title>
        <authorList>
            <person name="LaFrance B.J."/>
            <person name="Cassidy-Amstutz C."/>
            <person name="Nichols R.J."/>
            <person name="Oltrogge L.M."/>
            <person name="Nogales E."/>
            <person name="Savage D.F."/>
        </authorList>
    </citation>
    <scope>STRUCTURE BY ELECTRON MICROSCOPY (3.30 ANGSTROMS) OF 1-264 IN COMPLEX WITH FMN</scope>
    <scope>FMN COFACTOR</scope>
    <scope>SUBUNIT</scope>
    <scope>SUBCELLULAR LOCATION</scope>
    <scope>MUTAGENESIS OF TRP-87</scope>
    <source>
        <strain>ATCC 43589 / DSM 3109 / JCM 10099 / NBRC 100826 / MSB8</strain>
    </source>
</reference>
<reference evidence="24 25 26 27 28 29 30" key="13">
    <citation type="journal article" date="2022" name="Sci. Adv.">
        <title>Pore structure controls stability and molecular flux in engineered protein cages.</title>
        <authorList>
            <person name="Adamson L.S.R."/>
            <person name="Tasneem N."/>
            <person name="Andreas M.P."/>
            <person name="Close W."/>
            <person name="Jenner E.N."/>
            <person name="Szyszka T.N."/>
            <person name="Young R."/>
            <person name="Cheah L.C."/>
            <person name="Norman A."/>
            <person name="MacDermott-Opeskin H.I."/>
            <person name="O'Mara M.L."/>
            <person name="Sainsbury F."/>
            <person name="Giessen T.W."/>
            <person name="Lau Y.H."/>
        </authorList>
    </citation>
    <scope>STRUCTURE BY ELECTRON MICROSCOPY (2.53 ANGSTROMS) OF PORE MUTANTS</scope>
    <scope>FUNCTION</scope>
    <scope>COFACTOR</scope>
    <scope>SUBUNIT</scope>
    <scope>SUBCELLULAR LOCATION</scope>
    <scope>BIOTECHNOLOGY</scope>
    <scope>MUTAGENESIS OF 182-LYS--LEU-190; 183-GLU--LEU-190; 184-GLU--LEU-190; 184-GLU--PRO-189; 185-ALA--PRO-189; 186-GLY--TYR-188 AND HIS-187</scope>
    <source>
        <strain>ATCC 43589 / DSM 3109 / JCM 10099 / NBRC 100826 / MSB8</strain>
    </source>
</reference>
<feature type="chain" id="PRO_0000343950" description="Type 1 encapsulin shell protein">
    <location>
        <begin position="1"/>
        <end position="265"/>
    </location>
</feature>
<feature type="region of interest" description="Pore-forming loop" evidence="4 6">
    <location>
        <begin position="184"/>
        <end position="189"/>
    </location>
</feature>
<feature type="binding site" evidence="16 23">
    <location>
        <begin position="79"/>
        <end position="81"/>
    </location>
    <ligand>
        <name>FMN</name>
        <dbReference type="ChEBI" id="CHEBI:58210"/>
    </ligand>
</feature>
<feature type="binding site" evidence="8 16 23 31">
    <location>
        <position position="87"/>
    </location>
    <ligand>
        <name>FMN</name>
        <dbReference type="ChEBI" id="CHEBI:58210"/>
    </ligand>
</feature>
<feature type="binding site" evidence="8 31">
    <location>
        <begin position="90"/>
        <end position="94"/>
    </location>
    <ligand>
        <name>FMN</name>
        <dbReference type="ChEBI" id="CHEBI:58210"/>
    </ligand>
</feature>
<feature type="binding site" evidence="16 23">
    <location>
        <position position="235"/>
    </location>
    <ligand>
        <name>FMN</name>
        <dbReference type="ChEBI" id="CHEBI:58210"/>
    </ligand>
</feature>
<feature type="mutagenesis site" description="Loss of flavin-binding. No change in iron storage or iron release under aerobic or anaerobic conditions." evidence="8">
    <original>W</original>
    <variation>E</variation>
    <location>
        <position position="87"/>
    </location>
</feature>
<feature type="mutagenesis site" description="Makes normal nanocompartments, pore size increases to 10.1 A, considerably increased Cl(-) flux." evidence="9">
    <original>KEEAGHYPL</original>
    <variation>DD</variation>
    <location>
        <begin position="182"/>
        <end position="190"/>
    </location>
</feature>
<feature type="mutagenesis site" description="Makes few, fragmented nanocompartments." evidence="4">
    <original>KEEAGHYPL</original>
    <variation>G</variation>
    <location>
        <begin position="182"/>
        <end position="190"/>
    </location>
</feature>
<feature type="mutagenesis site" description="Makes normal nanocompartments, pore size increases to 11.3 A. Increased metabolic flux across the pore." evidence="4 6 9 21">
    <original>KEEAGHYPL</original>
    <variation>GG</variation>
    <location>
        <begin position="182"/>
        <end position="190"/>
    </location>
</feature>
<feature type="mutagenesis site" description="Makes normal nanocompartments, pore size increases to 6.7 A, considerably increased Cl(-) flux." evidence="9">
    <location>
        <begin position="184"/>
        <end position="190"/>
    </location>
</feature>
<feature type="mutagenesis site" description="Makes normal nanocompartments, pore size increases to about 6 A." evidence="4">
    <original>EAGHYP</original>
    <variation>AA</variation>
    <location>
        <begin position="184"/>
        <end position="189"/>
    </location>
</feature>
<feature type="mutagenesis site" description="Makes normal nanocompartments, pore size increases to about 5 A." evidence="4">
    <original>EAGHYP</original>
    <variation>AAAA</variation>
    <location>
        <begin position="184"/>
        <end position="189"/>
    </location>
</feature>
<feature type="mutagenesis site" description="Makes normal nanocompartments, pore size remains 3 A." evidence="4">
    <original>EAGHYP</original>
    <variation>AAAAAA</variation>
    <location>
        <begin position="184"/>
        <end position="189"/>
    </location>
</feature>
<feature type="mutagenesis site" description="Makes normal nanocompartments, pore size increases to 10.7 A, slightly increased Cl(-) flux." evidence="9">
    <original>EAGHYP</original>
    <variation>DD</variation>
    <location>
        <begin position="184"/>
        <end position="189"/>
    </location>
</feature>
<feature type="mutagenesis site" description="Toxic to cell." evidence="9">
    <original>EAGHYP</original>
    <variation>KK</variation>
    <location>
        <begin position="184"/>
        <end position="189"/>
    </location>
</feature>
<feature type="mutagenesis site" description="Makes few, fragmented nanocompartments." evidence="4">
    <location>
        <begin position="184"/>
        <end position="189"/>
    </location>
</feature>
<feature type="mutagenesis site" description="Toxic to cell." evidence="9">
    <original>AGHYP</original>
    <variation>EEE</variation>
    <location>
        <begin position="185"/>
        <end position="189"/>
    </location>
</feature>
<feature type="mutagenesis site" description="Makes normal nanocompartments, pore size increases to 5.5 A, no change in Cl(-) flux." evidence="9">
    <original>GHY</original>
    <variation>EEE</variation>
    <location>
        <begin position="186"/>
        <end position="188"/>
    </location>
</feature>
<feature type="mutagenesis site" description="Toxic to cell." evidence="9">
    <original>GHY</original>
    <variation>KKK</variation>
    <variation>RRR</variation>
    <location>
        <begin position="186"/>
        <end position="188"/>
    </location>
</feature>
<feature type="mutagenesis site" description="Makes normal nanocompartments, pore size increases up to 4.0 A, slightly increased Cl(-) flux." evidence="9">
    <original>H</original>
    <variation>K</variation>
    <variation>R</variation>
    <location>
        <position position="187"/>
    </location>
</feature>
<feature type="helix" evidence="33">
    <location>
        <begin position="2"/>
        <end position="4"/>
    </location>
</feature>
<feature type="helix" evidence="33">
    <location>
        <begin position="6"/>
        <end position="8"/>
    </location>
</feature>
<feature type="helix" evidence="33">
    <location>
        <begin position="13"/>
        <end position="30"/>
    </location>
</feature>
<feature type="helix" evidence="33">
    <location>
        <begin position="33"/>
        <end position="35"/>
    </location>
</feature>
<feature type="strand" evidence="33">
    <location>
        <begin position="37"/>
        <end position="40"/>
    </location>
</feature>
<feature type="strand" evidence="33">
    <location>
        <begin position="49"/>
        <end position="57"/>
    </location>
</feature>
<feature type="strand" evidence="33">
    <location>
        <begin position="68"/>
        <end position="74"/>
    </location>
</feature>
<feature type="strand" evidence="33">
    <location>
        <begin position="76"/>
        <end position="85"/>
    </location>
</feature>
<feature type="helix" evidence="33">
    <location>
        <begin position="86"/>
        <end position="90"/>
    </location>
</feature>
<feature type="turn" evidence="33">
    <location>
        <begin position="91"/>
        <end position="95"/>
    </location>
</feature>
<feature type="helix" evidence="33">
    <location>
        <begin position="102"/>
        <end position="121"/>
    </location>
</feature>
<feature type="turn" evidence="33">
    <location>
        <begin position="124"/>
        <end position="127"/>
    </location>
</feature>
<feature type="helix" evidence="33">
    <location>
        <begin position="131"/>
        <end position="133"/>
    </location>
</feature>
<feature type="helix" evidence="33">
    <location>
        <begin position="135"/>
        <end position="137"/>
    </location>
</feature>
<feature type="strand" evidence="33">
    <location>
        <begin position="138"/>
        <end position="140"/>
    </location>
</feature>
<feature type="helix" evidence="33">
    <location>
        <begin position="145"/>
        <end position="161"/>
    </location>
</feature>
<feature type="strand" evidence="33">
    <location>
        <begin position="168"/>
        <end position="173"/>
    </location>
</feature>
<feature type="helix" evidence="33">
    <location>
        <begin position="174"/>
        <end position="183"/>
    </location>
</feature>
<feature type="strand" evidence="34">
    <location>
        <begin position="186"/>
        <end position="188"/>
    </location>
</feature>
<feature type="helix" evidence="33">
    <location>
        <begin position="190"/>
        <end position="197"/>
    </location>
</feature>
<feature type="turn" evidence="32">
    <location>
        <begin position="198"/>
        <end position="200"/>
    </location>
</feature>
<feature type="strand" evidence="33">
    <location>
        <begin position="202"/>
        <end position="208"/>
    </location>
</feature>
<feature type="strand" evidence="33">
    <location>
        <begin position="210"/>
        <end position="216"/>
    </location>
</feature>
<feature type="strand" evidence="33">
    <location>
        <begin position="218"/>
        <end position="237"/>
    </location>
</feature>
<feature type="strand" evidence="33">
    <location>
        <begin position="239"/>
        <end position="255"/>
    </location>
</feature>
<feature type="helix" evidence="33">
    <location>
        <begin position="257"/>
        <end position="259"/>
    </location>
</feature>
<feature type="strand" evidence="33">
    <location>
        <begin position="260"/>
        <end position="264"/>
    </location>
</feature>
<evidence type="ECO:0000269" key="1">
    <source>
    </source>
</evidence>
<evidence type="ECO:0000269" key="2">
    <source>
    </source>
</evidence>
<evidence type="ECO:0000269" key="3">
    <source>
    </source>
</evidence>
<evidence type="ECO:0000269" key="4">
    <source>
    </source>
</evidence>
<evidence type="ECO:0000269" key="5">
    <source>
    </source>
</evidence>
<evidence type="ECO:0000269" key="6">
    <source>
    </source>
</evidence>
<evidence type="ECO:0000269" key="7">
    <source>
    </source>
</evidence>
<evidence type="ECO:0000269" key="8">
    <source>
    </source>
</evidence>
<evidence type="ECO:0000269" key="9">
    <source>
    </source>
</evidence>
<evidence type="ECO:0000269" key="10">
    <source>
    </source>
</evidence>
<evidence type="ECO:0000303" key="11">
    <source>
    </source>
</evidence>
<evidence type="ECO:0000303" key="12">
    <source>
    </source>
</evidence>
<evidence type="ECO:0000303" key="13">
    <source>
    </source>
</evidence>
<evidence type="ECO:0000305" key="14"/>
<evidence type="ECO:0000305" key="15">
    <source>
    </source>
</evidence>
<evidence type="ECO:0000305" key="16">
    <source>
    </source>
</evidence>
<evidence type="ECO:0000305" key="17">
    <source>
    </source>
</evidence>
<evidence type="ECO:0000305" key="18">
    <source>
    </source>
</evidence>
<evidence type="ECO:0000305" key="19">
    <source>
    </source>
</evidence>
<evidence type="ECO:0007744" key="20">
    <source>
        <dbReference type="PDB" id="3DKT"/>
    </source>
</evidence>
<evidence type="ECO:0007744" key="21">
    <source>
        <dbReference type="PDB" id="6WKV"/>
    </source>
</evidence>
<evidence type="ECO:0007744" key="22">
    <source>
        <dbReference type="PDB" id="7K5W"/>
    </source>
</evidence>
<evidence type="ECO:0007744" key="23">
    <source>
        <dbReference type="PDB" id="7KQ5"/>
    </source>
</evidence>
<evidence type="ECO:0007744" key="24">
    <source>
        <dbReference type="PDB" id="7LII"/>
    </source>
</evidence>
<evidence type="ECO:0007744" key="25">
    <source>
        <dbReference type="PDB" id="7LIJ"/>
    </source>
</evidence>
<evidence type="ECO:0007744" key="26">
    <source>
        <dbReference type="PDB" id="7LIK"/>
    </source>
</evidence>
<evidence type="ECO:0007744" key="27">
    <source>
        <dbReference type="PDB" id="7LIL"/>
    </source>
</evidence>
<evidence type="ECO:0007744" key="28">
    <source>
        <dbReference type="PDB" id="7LIM"/>
    </source>
</evidence>
<evidence type="ECO:0007744" key="29">
    <source>
        <dbReference type="PDB" id="7LIS"/>
    </source>
</evidence>
<evidence type="ECO:0007744" key="30">
    <source>
        <dbReference type="PDB" id="7LIT"/>
    </source>
</evidence>
<evidence type="ECO:0007744" key="31">
    <source>
        <dbReference type="PDB" id="7MU1"/>
    </source>
</evidence>
<evidence type="ECO:0007829" key="32">
    <source>
        <dbReference type="PDB" id="7K5W"/>
    </source>
</evidence>
<evidence type="ECO:0007829" key="33">
    <source>
        <dbReference type="PDB" id="7KQ5"/>
    </source>
</evidence>
<evidence type="ECO:0007829" key="34">
    <source>
        <dbReference type="PDB" id="7LIJ"/>
    </source>
</evidence>
<protein>
    <recommendedName>
        <fullName evidence="12">Type 1 encapsulin shell protein</fullName>
    </recommendedName>
    <alternativeName>
        <fullName evidence="11">Maritimacin</fullName>
        <ecNumber evidence="10">3.4.-.-</ecNumber>
    </alternativeName>
    <alternativeName>
        <fullName evidence="13">Thermotoga bacteriocin</fullName>
    </alternativeName>
</protein>
<sequence>MEFLKRSFAPLTEKQWQEIDNRAREIFKTQLYGRKFVDVEGPYGWEYAAHPLGEVEVLSDENEVVKWGLRKSLPLIELRATFTLDLWELDNLERGKPNVDLSSLEETVRKVAEFEDEVIFRGCEKSGVKGLLSFEERKIECGSTPKDLLEAIVRALSIFSKDGIEGPYTLVINTDRWINFLKEEAGHYPLEKRVEECLRGGKIITTPRIEDALVVSERGGDFKLILGQDLSIGYEDREKDAVRLFITETFTFQVVNPEALILLKF</sequence>